<accession>A9KF42</accession>
<dbReference type="EC" id="3.1.21.10" evidence="1"/>
<dbReference type="EMBL" id="CP000733">
    <property type="protein sequence ID" value="ABS77887.1"/>
    <property type="molecule type" value="Genomic_DNA"/>
</dbReference>
<dbReference type="RefSeq" id="WP_005772101.1">
    <property type="nucleotide sequence ID" value="NC_009727.1"/>
</dbReference>
<dbReference type="SMR" id="A9KF42"/>
<dbReference type="KEGG" id="cbd:CBUD_0421"/>
<dbReference type="HOGENOM" id="CLU_091257_2_1_6"/>
<dbReference type="Proteomes" id="UP000008555">
    <property type="component" value="Chromosome"/>
</dbReference>
<dbReference type="GO" id="GO:0005737">
    <property type="term" value="C:cytoplasm"/>
    <property type="evidence" value="ECO:0007669"/>
    <property type="project" value="UniProtKB-SubCell"/>
</dbReference>
<dbReference type="GO" id="GO:0048476">
    <property type="term" value="C:Holliday junction resolvase complex"/>
    <property type="evidence" value="ECO:0007669"/>
    <property type="project" value="UniProtKB-UniRule"/>
</dbReference>
<dbReference type="GO" id="GO:0008821">
    <property type="term" value="F:crossover junction DNA endonuclease activity"/>
    <property type="evidence" value="ECO:0007669"/>
    <property type="project" value="UniProtKB-UniRule"/>
</dbReference>
<dbReference type="GO" id="GO:0003677">
    <property type="term" value="F:DNA binding"/>
    <property type="evidence" value="ECO:0007669"/>
    <property type="project" value="UniProtKB-KW"/>
</dbReference>
<dbReference type="GO" id="GO:0000287">
    <property type="term" value="F:magnesium ion binding"/>
    <property type="evidence" value="ECO:0007669"/>
    <property type="project" value="UniProtKB-UniRule"/>
</dbReference>
<dbReference type="GO" id="GO:0006310">
    <property type="term" value="P:DNA recombination"/>
    <property type="evidence" value="ECO:0007669"/>
    <property type="project" value="UniProtKB-UniRule"/>
</dbReference>
<dbReference type="GO" id="GO:0006281">
    <property type="term" value="P:DNA repair"/>
    <property type="evidence" value="ECO:0007669"/>
    <property type="project" value="UniProtKB-UniRule"/>
</dbReference>
<dbReference type="CDD" id="cd16962">
    <property type="entry name" value="RuvC"/>
    <property type="match status" value="1"/>
</dbReference>
<dbReference type="FunFam" id="3.30.420.10:FF:000002">
    <property type="entry name" value="Crossover junction endodeoxyribonuclease RuvC"/>
    <property type="match status" value="1"/>
</dbReference>
<dbReference type="Gene3D" id="3.30.420.10">
    <property type="entry name" value="Ribonuclease H-like superfamily/Ribonuclease H"/>
    <property type="match status" value="1"/>
</dbReference>
<dbReference type="HAMAP" id="MF_00034">
    <property type="entry name" value="RuvC"/>
    <property type="match status" value="1"/>
</dbReference>
<dbReference type="InterPro" id="IPR012337">
    <property type="entry name" value="RNaseH-like_sf"/>
</dbReference>
<dbReference type="InterPro" id="IPR036397">
    <property type="entry name" value="RNaseH_sf"/>
</dbReference>
<dbReference type="InterPro" id="IPR020563">
    <property type="entry name" value="X-over_junc_endoDNase_Mg_BS"/>
</dbReference>
<dbReference type="InterPro" id="IPR002176">
    <property type="entry name" value="X-over_junc_endoDNase_RuvC"/>
</dbReference>
<dbReference type="NCBIfam" id="TIGR00228">
    <property type="entry name" value="ruvC"/>
    <property type="match status" value="1"/>
</dbReference>
<dbReference type="PANTHER" id="PTHR30194">
    <property type="entry name" value="CROSSOVER JUNCTION ENDODEOXYRIBONUCLEASE RUVC"/>
    <property type="match status" value="1"/>
</dbReference>
<dbReference type="PANTHER" id="PTHR30194:SF3">
    <property type="entry name" value="CROSSOVER JUNCTION ENDODEOXYRIBONUCLEASE RUVC"/>
    <property type="match status" value="1"/>
</dbReference>
<dbReference type="Pfam" id="PF02075">
    <property type="entry name" value="RuvC"/>
    <property type="match status" value="1"/>
</dbReference>
<dbReference type="PRINTS" id="PR00696">
    <property type="entry name" value="RSOLVASERUVC"/>
</dbReference>
<dbReference type="SUPFAM" id="SSF53098">
    <property type="entry name" value="Ribonuclease H-like"/>
    <property type="match status" value="1"/>
</dbReference>
<dbReference type="PROSITE" id="PS01321">
    <property type="entry name" value="RUVC"/>
    <property type="match status" value="1"/>
</dbReference>
<keyword id="KW-0963">Cytoplasm</keyword>
<keyword id="KW-0227">DNA damage</keyword>
<keyword id="KW-0233">DNA recombination</keyword>
<keyword id="KW-0234">DNA repair</keyword>
<keyword id="KW-0238">DNA-binding</keyword>
<keyword id="KW-0255">Endonuclease</keyword>
<keyword id="KW-0378">Hydrolase</keyword>
<keyword id="KW-0460">Magnesium</keyword>
<keyword id="KW-0479">Metal-binding</keyword>
<keyword id="KW-0540">Nuclease</keyword>
<protein>
    <recommendedName>
        <fullName evidence="1">Crossover junction endodeoxyribonuclease RuvC</fullName>
        <ecNumber evidence="1">3.1.21.10</ecNumber>
    </recommendedName>
    <alternativeName>
        <fullName evidence="1">Holliday junction nuclease RuvC</fullName>
    </alternativeName>
    <alternativeName>
        <fullName evidence="1">Holliday junction resolvase RuvC</fullName>
    </alternativeName>
</protein>
<gene>
    <name evidence="1" type="primary">ruvC</name>
    <name type="ordered locus">CBUD_0421</name>
</gene>
<proteinExistence type="inferred from homology"/>
<reference key="1">
    <citation type="journal article" date="2009" name="Infect. Immun.">
        <title>Comparative genomics reveal extensive transposon-mediated genomic plasticity and diversity among potential effector proteins within the genus Coxiella.</title>
        <authorList>
            <person name="Beare P.A."/>
            <person name="Unsworth N."/>
            <person name="Andoh M."/>
            <person name="Voth D.E."/>
            <person name="Omsland A."/>
            <person name="Gilk S.D."/>
            <person name="Williams K.P."/>
            <person name="Sobral B.W."/>
            <person name="Kupko J.J. III"/>
            <person name="Porcella S.F."/>
            <person name="Samuel J.E."/>
            <person name="Heinzen R.A."/>
        </authorList>
    </citation>
    <scope>NUCLEOTIDE SEQUENCE [LARGE SCALE GENOMIC DNA]</scope>
    <source>
        <strain>Dugway 5J108-111</strain>
    </source>
</reference>
<feature type="chain" id="PRO_1000074482" description="Crossover junction endodeoxyribonuclease RuvC">
    <location>
        <begin position="1"/>
        <end position="172"/>
    </location>
</feature>
<feature type="active site" evidence="1">
    <location>
        <position position="12"/>
    </location>
</feature>
<feature type="active site" evidence="1">
    <location>
        <position position="71"/>
    </location>
</feature>
<feature type="active site" evidence="1">
    <location>
        <position position="143"/>
    </location>
</feature>
<feature type="binding site" evidence="1">
    <location>
        <position position="12"/>
    </location>
    <ligand>
        <name>Mg(2+)</name>
        <dbReference type="ChEBI" id="CHEBI:18420"/>
        <label>1</label>
    </ligand>
</feature>
<feature type="binding site" evidence="1">
    <location>
        <position position="71"/>
    </location>
    <ligand>
        <name>Mg(2+)</name>
        <dbReference type="ChEBI" id="CHEBI:18420"/>
        <label>2</label>
    </ligand>
</feature>
<feature type="binding site" evidence="1">
    <location>
        <position position="143"/>
    </location>
    <ligand>
        <name>Mg(2+)</name>
        <dbReference type="ChEBI" id="CHEBI:18420"/>
        <label>1</label>
    </ligand>
</feature>
<name>RUVC_COXBN</name>
<comment type="function">
    <text evidence="1">The RuvA-RuvB-RuvC complex processes Holliday junction (HJ) DNA during genetic recombination and DNA repair. Endonuclease that resolves HJ intermediates. Cleaves cruciform DNA by making single-stranded nicks across the HJ at symmetrical positions within the homologous arms, yielding a 5'-phosphate and a 3'-hydroxyl group; requires a central core of homology in the junction. The consensus cleavage sequence is 5'-(A/T)TT(C/G)-3'. Cleavage occurs on the 3'-side of the TT dinucleotide at the point of strand exchange. HJ branch migration catalyzed by RuvA-RuvB allows RuvC to scan DNA until it finds its consensus sequence, where it cleaves and resolves the cruciform DNA.</text>
</comment>
<comment type="catalytic activity">
    <reaction evidence="1">
        <text>Endonucleolytic cleavage at a junction such as a reciprocal single-stranded crossover between two homologous DNA duplexes (Holliday junction).</text>
        <dbReference type="EC" id="3.1.21.10"/>
    </reaction>
</comment>
<comment type="cofactor">
    <cofactor evidence="1">
        <name>Mg(2+)</name>
        <dbReference type="ChEBI" id="CHEBI:18420"/>
    </cofactor>
    <text evidence="1">Binds 2 Mg(2+) ion per subunit.</text>
</comment>
<comment type="subunit">
    <text evidence="1">Homodimer which binds Holliday junction (HJ) DNA. The HJ becomes 2-fold symmetrical on binding to RuvC with unstacked arms; it has a different conformation from HJ DNA in complex with RuvA. In the full resolvosome a probable DNA-RuvA(4)-RuvB(12)-RuvC(2) complex forms which resolves the HJ.</text>
</comment>
<comment type="subcellular location">
    <subcellularLocation>
        <location evidence="1">Cytoplasm</location>
    </subcellularLocation>
</comment>
<comment type="similarity">
    <text evidence="1">Belongs to the RuvC family.</text>
</comment>
<evidence type="ECO:0000255" key="1">
    <source>
        <dbReference type="HAMAP-Rule" id="MF_00034"/>
    </source>
</evidence>
<organism>
    <name type="scientific">Coxiella burnetii (strain Dugway 5J108-111)</name>
    <dbReference type="NCBI Taxonomy" id="434922"/>
    <lineage>
        <taxon>Bacteria</taxon>
        <taxon>Pseudomonadati</taxon>
        <taxon>Pseudomonadota</taxon>
        <taxon>Gammaproteobacteria</taxon>
        <taxon>Legionellales</taxon>
        <taxon>Coxiellaceae</taxon>
        <taxon>Coxiella</taxon>
    </lineage>
</organism>
<sequence length="172" mass="18638">MDNPRRIIIGIDPGSRITGYGIIWSQGSKQGCIAFGQIKTDNDSLNFRLHQIERELRDLILIHRPHEAAIEQVFTFHNHQSALKLGQARGAALVATAACALPVAEYSARQIKQAVVGYGAATKAQVQHMVHLLLQLEKAPPADAADALAIALCHATSSRLSEKLMQAKGTLT</sequence>